<proteinExistence type="inferred from homology"/>
<reference key="1">
    <citation type="journal article" date="2005" name="Proc. Natl. Acad. Sci. U.S.A.">
        <title>The psychrophilic lifestyle as revealed by the genome sequence of Colwellia psychrerythraea 34H through genomic and proteomic analyses.</title>
        <authorList>
            <person name="Methe B.A."/>
            <person name="Nelson K.E."/>
            <person name="Deming J.W."/>
            <person name="Momen B."/>
            <person name="Melamud E."/>
            <person name="Zhang X."/>
            <person name="Moult J."/>
            <person name="Madupu R."/>
            <person name="Nelson W.C."/>
            <person name="Dodson R.J."/>
            <person name="Brinkac L.M."/>
            <person name="Daugherty S.C."/>
            <person name="Durkin A.S."/>
            <person name="DeBoy R.T."/>
            <person name="Kolonay J.F."/>
            <person name="Sullivan S.A."/>
            <person name="Zhou L."/>
            <person name="Davidsen T.M."/>
            <person name="Wu M."/>
            <person name="Huston A.L."/>
            <person name="Lewis M."/>
            <person name="Weaver B."/>
            <person name="Weidman J.F."/>
            <person name="Khouri H."/>
            <person name="Utterback T.R."/>
            <person name="Feldblyum T.V."/>
            <person name="Fraser C.M."/>
        </authorList>
    </citation>
    <scope>NUCLEOTIDE SEQUENCE [LARGE SCALE GENOMIC DNA]</scope>
    <source>
        <strain>34H / ATCC BAA-681</strain>
    </source>
</reference>
<name>UVRC_COLP3</name>
<evidence type="ECO:0000255" key="1">
    <source>
        <dbReference type="HAMAP-Rule" id="MF_00203"/>
    </source>
</evidence>
<accession>Q47Z18</accession>
<sequence>MLHNTTDNVENNQTIKASTFDSEAFLRVVTEQAGVYRMYDSKQVVIYVGKAKQLKKRLASYFRKDVGSVKTQVLVKQIAAIEVTVTHTEGEALILENNYIKKYQPKYNILLRDDKSYPYLLITAHKHPKLGLHRGGKKVKGEYFGPFPTVGAVWESLRLMQKIFPIRQCEDSYYRARSRPCLQHQLGRCSAPCVDKISVDDYKEQVNLAKLFLQGKSSAVIEQLVARMELASNELHFELAAKYRDQIVTLRKVQQQQHVSGHVAELDVVGLYRDKTQVCIHLLFIRQHKILGSKSYFPTVPSESSDSEILQAFIAQHYLSNEMLSHGKVQSSIPKEIVIKESIEQVVELARLLSEQAEYDVKISTNTRSERAQYLKLAGTNAHTALVTRNSHKESMQARFVALNEVFELENGIQRIECFDISHTMGQQTVASNVVFNQEGPLKTDYRRYNVFGITPGDDYAAMAFALNKRYGKLKANPIKPEEHGALEKLPDIVFIDGGKGQLAKAEEFFSQLALTRTPLLVGVAKGESRKPGLETLILAGSHQLISLPATSPALHLVQHIRDESHRFAITGHRAKRQKVSKKSRLESIEGIGAKKRQSLLTFLGGLQEVMQADITALAKVPGISHVLAEKIHNALHDK</sequence>
<feature type="chain" id="PRO_0000227416" description="UvrABC system protein C">
    <location>
        <begin position="1"/>
        <end position="639"/>
    </location>
</feature>
<feature type="domain" description="GIY-YIG" evidence="1">
    <location>
        <begin position="31"/>
        <end position="109"/>
    </location>
</feature>
<feature type="domain" description="UVR" evidence="1">
    <location>
        <begin position="218"/>
        <end position="253"/>
    </location>
</feature>
<organism>
    <name type="scientific">Colwellia psychrerythraea (strain 34H / ATCC BAA-681)</name>
    <name type="common">Vibrio psychroerythus</name>
    <dbReference type="NCBI Taxonomy" id="167879"/>
    <lineage>
        <taxon>Bacteria</taxon>
        <taxon>Pseudomonadati</taxon>
        <taxon>Pseudomonadota</taxon>
        <taxon>Gammaproteobacteria</taxon>
        <taxon>Alteromonadales</taxon>
        <taxon>Colwelliaceae</taxon>
        <taxon>Colwellia</taxon>
    </lineage>
</organism>
<dbReference type="EMBL" id="CP000083">
    <property type="protein sequence ID" value="AAZ26684.1"/>
    <property type="molecule type" value="Genomic_DNA"/>
</dbReference>
<dbReference type="RefSeq" id="WP_011044039.1">
    <property type="nucleotide sequence ID" value="NC_003910.7"/>
</dbReference>
<dbReference type="SMR" id="Q47Z18"/>
<dbReference type="STRING" id="167879.CPS_3270"/>
<dbReference type="KEGG" id="cps:CPS_3270"/>
<dbReference type="eggNOG" id="COG0322">
    <property type="taxonomic scope" value="Bacteria"/>
</dbReference>
<dbReference type="HOGENOM" id="CLU_014841_3_2_6"/>
<dbReference type="Proteomes" id="UP000000547">
    <property type="component" value="Chromosome"/>
</dbReference>
<dbReference type="GO" id="GO:0005737">
    <property type="term" value="C:cytoplasm"/>
    <property type="evidence" value="ECO:0007669"/>
    <property type="project" value="UniProtKB-SubCell"/>
</dbReference>
<dbReference type="GO" id="GO:0009380">
    <property type="term" value="C:excinuclease repair complex"/>
    <property type="evidence" value="ECO:0007669"/>
    <property type="project" value="InterPro"/>
</dbReference>
<dbReference type="GO" id="GO:0003677">
    <property type="term" value="F:DNA binding"/>
    <property type="evidence" value="ECO:0007669"/>
    <property type="project" value="UniProtKB-UniRule"/>
</dbReference>
<dbReference type="GO" id="GO:0009381">
    <property type="term" value="F:excinuclease ABC activity"/>
    <property type="evidence" value="ECO:0007669"/>
    <property type="project" value="UniProtKB-UniRule"/>
</dbReference>
<dbReference type="GO" id="GO:0006289">
    <property type="term" value="P:nucleotide-excision repair"/>
    <property type="evidence" value="ECO:0007669"/>
    <property type="project" value="UniProtKB-UniRule"/>
</dbReference>
<dbReference type="GO" id="GO:0009432">
    <property type="term" value="P:SOS response"/>
    <property type="evidence" value="ECO:0007669"/>
    <property type="project" value="UniProtKB-UniRule"/>
</dbReference>
<dbReference type="CDD" id="cd10434">
    <property type="entry name" value="GIY-YIG_UvrC_Cho"/>
    <property type="match status" value="1"/>
</dbReference>
<dbReference type="FunFam" id="3.30.420.340:FF:000001">
    <property type="entry name" value="UvrABC system protein C"/>
    <property type="match status" value="1"/>
</dbReference>
<dbReference type="FunFam" id="3.40.1440.10:FF:000001">
    <property type="entry name" value="UvrABC system protein C"/>
    <property type="match status" value="1"/>
</dbReference>
<dbReference type="Gene3D" id="1.10.150.20">
    <property type="entry name" value="5' to 3' exonuclease, C-terminal subdomain"/>
    <property type="match status" value="1"/>
</dbReference>
<dbReference type="Gene3D" id="3.40.1440.10">
    <property type="entry name" value="GIY-YIG endonuclease"/>
    <property type="match status" value="1"/>
</dbReference>
<dbReference type="Gene3D" id="4.10.860.10">
    <property type="entry name" value="UVR domain"/>
    <property type="match status" value="1"/>
</dbReference>
<dbReference type="Gene3D" id="3.30.420.340">
    <property type="entry name" value="UvrC, RNAse H endonuclease domain"/>
    <property type="match status" value="1"/>
</dbReference>
<dbReference type="HAMAP" id="MF_00203">
    <property type="entry name" value="UvrC"/>
    <property type="match status" value="1"/>
</dbReference>
<dbReference type="InterPro" id="IPR000305">
    <property type="entry name" value="GIY-YIG_endonuc"/>
</dbReference>
<dbReference type="InterPro" id="IPR035901">
    <property type="entry name" value="GIY-YIG_endonuc_sf"/>
</dbReference>
<dbReference type="InterPro" id="IPR047296">
    <property type="entry name" value="GIY-YIG_UvrC_Cho"/>
</dbReference>
<dbReference type="InterPro" id="IPR003583">
    <property type="entry name" value="Hlx-hairpin-Hlx_DNA-bd_motif"/>
</dbReference>
<dbReference type="InterPro" id="IPR010994">
    <property type="entry name" value="RuvA_2-like"/>
</dbReference>
<dbReference type="InterPro" id="IPR001943">
    <property type="entry name" value="UVR_dom"/>
</dbReference>
<dbReference type="InterPro" id="IPR036876">
    <property type="entry name" value="UVR_dom_sf"/>
</dbReference>
<dbReference type="InterPro" id="IPR050066">
    <property type="entry name" value="UvrABC_protein_C"/>
</dbReference>
<dbReference type="InterPro" id="IPR004791">
    <property type="entry name" value="UvrC"/>
</dbReference>
<dbReference type="InterPro" id="IPR001162">
    <property type="entry name" value="UvrC_RNase_H_dom"/>
</dbReference>
<dbReference type="InterPro" id="IPR038476">
    <property type="entry name" value="UvrC_RNase_H_dom_sf"/>
</dbReference>
<dbReference type="NCBIfam" id="NF001824">
    <property type="entry name" value="PRK00558.1-5"/>
    <property type="match status" value="1"/>
</dbReference>
<dbReference type="NCBIfam" id="TIGR00194">
    <property type="entry name" value="uvrC"/>
    <property type="match status" value="1"/>
</dbReference>
<dbReference type="PANTHER" id="PTHR30562:SF1">
    <property type="entry name" value="UVRABC SYSTEM PROTEIN C"/>
    <property type="match status" value="1"/>
</dbReference>
<dbReference type="PANTHER" id="PTHR30562">
    <property type="entry name" value="UVRC/OXIDOREDUCTASE"/>
    <property type="match status" value="1"/>
</dbReference>
<dbReference type="Pfam" id="PF01541">
    <property type="entry name" value="GIY-YIG"/>
    <property type="match status" value="1"/>
</dbReference>
<dbReference type="Pfam" id="PF14520">
    <property type="entry name" value="HHH_5"/>
    <property type="match status" value="1"/>
</dbReference>
<dbReference type="Pfam" id="PF02151">
    <property type="entry name" value="UVR"/>
    <property type="match status" value="1"/>
</dbReference>
<dbReference type="Pfam" id="PF22920">
    <property type="entry name" value="UvrC_RNaseH"/>
    <property type="match status" value="1"/>
</dbReference>
<dbReference type="Pfam" id="PF08459">
    <property type="entry name" value="UvrC_RNaseH_dom"/>
    <property type="match status" value="1"/>
</dbReference>
<dbReference type="SMART" id="SM00465">
    <property type="entry name" value="GIYc"/>
    <property type="match status" value="1"/>
</dbReference>
<dbReference type="SMART" id="SM00278">
    <property type="entry name" value="HhH1"/>
    <property type="match status" value="2"/>
</dbReference>
<dbReference type="SUPFAM" id="SSF46600">
    <property type="entry name" value="C-terminal UvrC-binding domain of UvrB"/>
    <property type="match status" value="1"/>
</dbReference>
<dbReference type="SUPFAM" id="SSF82771">
    <property type="entry name" value="GIY-YIG endonuclease"/>
    <property type="match status" value="1"/>
</dbReference>
<dbReference type="SUPFAM" id="SSF47781">
    <property type="entry name" value="RuvA domain 2-like"/>
    <property type="match status" value="1"/>
</dbReference>
<dbReference type="PROSITE" id="PS50164">
    <property type="entry name" value="GIY_YIG"/>
    <property type="match status" value="1"/>
</dbReference>
<dbReference type="PROSITE" id="PS50151">
    <property type="entry name" value="UVR"/>
    <property type="match status" value="1"/>
</dbReference>
<dbReference type="PROSITE" id="PS50165">
    <property type="entry name" value="UVRC"/>
    <property type="match status" value="1"/>
</dbReference>
<protein>
    <recommendedName>
        <fullName evidence="1">UvrABC system protein C</fullName>
        <shortName evidence="1">Protein UvrC</shortName>
    </recommendedName>
    <alternativeName>
        <fullName evidence="1">Excinuclease ABC subunit C</fullName>
    </alternativeName>
</protein>
<comment type="function">
    <text evidence="1">The UvrABC repair system catalyzes the recognition and processing of DNA lesions. UvrC both incises the 5' and 3' sides of the lesion. The N-terminal half is responsible for the 3' incision and the C-terminal half is responsible for the 5' incision.</text>
</comment>
<comment type="subunit">
    <text evidence="1">Interacts with UvrB in an incision complex.</text>
</comment>
<comment type="subcellular location">
    <subcellularLocation>
        <location evidence="1">Cytoplasm</location>
    </subcellularLocation>
</comment>
<comment type="similarity">
    <text evidence="1">Belongs to the UvrC family.</text>
</comment>
<keyword id="KW-0963">Cytoplasm</keyword>
<keyword id="KW-0227">DNA damage</keyword>
<keyword id="KW-0228">DNA excision</keyword>
<keyword id="KW-0234">DNA repair</keyword>
<keyword id="KW-0267">Excision nuclease</keyword>
<keyword id="KW-0742">SOS response</keyword>
<gene>
    <name evidence="1" type="primary">uvrC</name>
    <name type="ordered locus">CPS_3270</name>
</gene>